<sequence length="208" mass="24561">MTYDSEFGSHVSLYRDRIKQVIDDSLNEHLNSMILRVDLHDPIDTENMDNPFFQPRVDSGAISRFTSALKAKLKHDKHIKTQRKDWPDSRHSTLRYAWVREYTKNRKRHYHLILCFNQDAYYHLGDYDLNRNTLRTMITTAWYSALGIPIDSSGKLVNYPPNGKYLLNRKRDNFEQTYSDLMNRVDYMTKVRTKIVGDGDRNFGCSRG</sequence>
<gene>
    <name type="primary">yfjJ</name>
    <name type="ordered locus">b2626</name>
    <name type="ordered locus">JW2607</name>
</gene>
<protein>
    <recommendedName>
        <fullName>Uncharacterized protein YfjJ</fullName>
    </recommendedName>
</protein>
<organism>
    <name type="scientific">Escherichia coli (strain K12)</name>
    <dbReference type="NCBI Taxonomy" id="83333"/>
    <lineage>
        <taxon>Bacteria</taxon>
        <taxon>Pseudomonadati</taxon>
        <taxon>Pseudomonadota</taxon>
        <taxon>Gammaproteobacteria</taxon>
        <taxon>Enterobacterales</taxon>
        <taxon>Enterobacteriaceae</taxon>
        <taxon>Escherichia</taxon>
    </lineage>
</organism>
<proteinExistence type="predicted"/>
<dbReference type="EMBL" id="U36840">
    <property type="protein sequence ID" value="AAA79795.1"/>
    <property type="molecule type" value="Genomic_DNA"/>
</dbReference>
<dbReference type="EMBL" id="U00096">
    <property type="protein sequence ID" value="AAC75674.1"/>
    <property type="molecule type" value="Genomic_DNA"/>
</dbReference>
<dbReference type="EMBL" id="AP009048">
    <property type="protein sequence ID" value="BAE76761.1"/>
    <property type="molecule type" value="Genomic_DNA"/>
</dbReference>
<dbReference type="PIR" id="D65041">
    <property type="entry name" value="D65041"/>
</dbReference>
<dbReference type="RefSeq" id="NP_417115.1">
    <property type="nucleotide sequence ID" value="NC_000913.3"/>
</dbReference>
<dbReference type="RefSeq" id="WP_000220524.1">
    <property type="nucleotide sequence ID" value="NZ_LN832404.1"/>
</dbReference>
<dbReference type="BioGRID" id="4259393">
    <property type="interactions" value="8"/>
</dbReference>
<dbReference type="FunCoup" id="P52125">
    <property type="interactions" value="130"/>
</dbReference>
<dbReference type="IntAct" id="P52125">
    <property type="interactions" value="6"/>
</dbReference>
<dbReference type="STRING" id="511145.b2626"/>
<dbReference type="PaxDb" id="511145-b2626"/>
<dbReference type="EnsemblBacteria" id="AAC75674">
    <property type="protein sequence ID" value="AAC75674"/>
    <property type="gene ID" value="b2626"/>
</dbReference>
<dbReference type="GeneID" id="947112"/>
<dbReference type="KEGG" id="ecj:JW2607"/>
<dbReference type="KEGG" id="eco:b2626"/>
<dbReference type="KEGG" id="ecoc:C3026_14530"/>
<dbReference type="PATRIC" id="fig|83333.103.peg.3511"/>
<dbReference type="EchoBASE" id="EB2988"/>
<dbReference type="eggNOG" id="ENOG5032T6W">
    <property type="taxonomic scope" value="Bacteria"/>
</dbReference>
<dbReference type="HOGENOM" id="CLU_086947_0_0_6"/>
<dbReference type="InParanoid" id="P52125"/>
<dbReference type="OMA" id="NKEVTRF"/>
<dbReference type="OrthoDB" id="5701642at2"/>
<dbReference type="PhylomeDB" id="P52125"/>
<dbReference type="BioCyc" id="EcoCyc:G7361-MONOMER"/>
<dbReference type="PRO" id="PR:P52125"/>
<dbReference type="Proteomes" id="UP000000625">
    <property type="component" value="Chromosome"/>
</dbReference>
<dbReference type="Pfam" id="PF11726">
    <property type="entry name" value="YagK_YfjJ_C"/>
    <property type="match status" value="1"/>
</dbReference>
<reference key="1">
    <citation type="journal article" date="1997" name="Science">
        <title>The complete genome sequence of Escherichia coli K-12.</title>
        <authorList>
            <person name="Blattner F.R."/>
            <person name="Plunkett G. III"/>
            <person name="Bloch C.A."/>
            <person name="Perna N.T."/>
            <person name="Burland V."/>
            <person name="Riley M."/>
            <person name="Collado-Vides J."/>
            <person name="Glasner J.D."/>
            <person name="Rode C.K."/>
            <person name="Mayhew G.F."/>
            <person name="Gregor J."/>
            <person name="Davis N.W."/>
            <person name="Kirkpatrick H.A."/>
            <person name="Goeden M.A."/>
            <person name="Rose D.J."/>
            <person name="Mau B."/>
            <person name="Shao Y."/>
        </authorList>
    </citation>
    <scope>NUCLEOTIDE SEQUENCE [LARGE SCALE GENOMIC DNA]</scope>
    <source>
        <strain>K12 / MG1655 / ATCC 47076</strain>
    </source>
</reference>
<reference key="2">
    <citation type="journal article" date="2006" name="Mol. Syst. Biol.">
        <title>Highly accurate genome sequences of Escherichia coli K-12 strains MG1655 and W3110.</title>
        <authorList>
            <person name="Hayashi K."/>
            <person name="Morooka N."/>
            <person name="Yamamoto Y."/>
            <person name="Fujita K."/>
            <person name="Isono K."/>
            <person name="Choi S."/>
            <person name="Ohtsubo E."/>
            <person name="Baba T."/>
            <person name="Wanner B.L."/>
            <person name="Mori H."/>
            <person name="Horiuchi T."/>
        </authorList>
    </citation>
    <scope>NUCLEOTIDE SEQUENCE [LARGE SCALE GENOMIC DNA]</scope>
    <source>
        <strain>K12 / W3110 / ATCC 27325 / DSM 5911</strain>
    </source>
</reference>
<comment type="similarity">
    <text evidence="1">To E.coli YagK.</text>
</comment>
<keyword id="KW-1185">Reference proteome</keyword>
<accession>P52125</accession>
<accession>Q2MAE5</accession>
<evidence type="ECO:0000305" key="1"/>
<name>YFJJ_ECOLI</name>
<feature type="chain" id="PRO_0000169275" description="Uncharacterized protein YfjJ">
    <location>
        <begin position="1"/>
        <end position="208"/>
    </location>
</feature>